<gene>
    <name evidence="1" type="primary">thyA</name>
    <name type="ordered locus">MSMEG_2670</name>
    <name type="ordered locus">MSMEI_2606</name>
</gene>
<organism>
    <name type="scientific">Mycolicibacterium smegmatis (strain ATCC 700084 / mc(2)155)</name>
    <name type="common">Mycobacterium smegmatis</name>
    <dbReference type="NCBI Taxonomy" id="246196"/>
    <lineage>
        <taxon>Bacteria</taxon>
        <taxon>Bacillati</taxon>
        <taxon>Actinomycetota</taxon>
        <taxon>Actinomycetes</taxon>
        <taxon>Mycobacteriales</taxon>
        <taxon>Mycobacteriaceae</taxon>
        <taxon>Mycolicibacterium</taxon>
    </lineage>
</organism>
<keyword id="KW-0963">Cytoplasm</keyword>
<keyword id="KW-0489">Methyltransferase</keyword>
<keyword id="KW-0545">Nucleotide biosynthesis</keyword>
<keyword id="KW-1185">Reference proteome</keyword>
<keyword id="KW-0808">Transferase</keyword>
<evidence type="ECO:0000255" key="1">
    <source>
        <dbReference type="HAMAP-Rule" id="MF_00008"/>
    </source>
</evidence>
<feature type="chain" id="PRO_1000000629" description="Thymidylate synthase">
    <location>
        <begin position="1"/>
        <end position="266"/>
    </location>
</feature>
<feature type="active site" description="Nucleophile" evidence="1">
    <location>
        <position position="149"/>
    </location>
</feature>
<feature type="binding site" description="in other chain" evidence="1">
    <location>
        <position position="24"/>
    </location>
    <ligand>
        <name>dUMP</name>
        <dbReference type="ChEBI" id="CHEBI:246422"/>
        <note>ligand shared between dimeric partners</note>
    </ligand>
</feature>
<feature type="binding site" evidence="1">
    <location>
        <position position="54"/>
    </location>
    <ligand>
        <name>(6R)-5,10-methylene-5,6,7,8-tetrahydrofolate</name>
        <dbReference type="ChEBI" id="CHEBI:15636"/>
    </ligand>
</feature>
<feature type="binding site" evidence="1">
    <location>
        <begin position="129"/>
        <end position="130"/>
    </location>
    <ligand>
        <name>dUMP</name>
        <dbReference type="ChEBI" id="CHEBI:246422"/>
        <note>ligand shared between dimeric partners</note>
    </ligand>
</feature>
<feature type="binding site" description="in other chain" evidence="1">
    <location>
        <begin position="169"/>
        <end position="172"/>
    </location>
    <ligand>
        <name>dUMP</name>
        <dbReference type="ChEBI" id="CHEBI:246422"/>
        <note>ligand shared between dimeric partners</note>
    </ligand>
</feature>
<feature type="binding site" evidence="1">
    <location>
        <position position="172"/>
    </location>
    <ligand>
        <name>(6R)-5,10-methylene-5,6,7,8-tetrahydrofolate</name>
        <dbReference type="ChEBI" id="CHEBI:15636"/>
    </ligand>
</feature>
<feature type="binding site" description="in other chain" evidence="1">
    <location>
        <position position="180"/>
    </location>
    <ligand>
        <name>dUMP</name>
        <dbReference type="ChEBI" id="CHEBI:246422"/>
        <note>ligand shared between dimeric partners</note>
    </ligand>
</feature>
<feature type="binding site" description="in other chain" evidence="1">
    <location>
        <begin position="210"/>
        <end position="212"/>
    </location>
    <ligand>
        <name>dUMP</name>
        <dbReference type="ChEBI" id="CHEBI:246422"/>
        <note>ligand shared between dimeric partners</note>
    </ligand>
</feature>
<feature type="binding site" evidence="1">
    <location>
        <position position="265"/>
    </location>
    <ligand>
        <name>(6R)-5,10-methylene-5,6,7,8-tetrahydrofolate</name>
        <dbReference type="ChEBI" id="CHEBI:15636"/>
    </ligand>
</feature>
<accession>A0QVR9</accession>
<accession>I7G931</accession>
<proteinExistence type="inferred from homology"/>
<reference key="1">
    <citation type="submission" date="2006-10" db="EMBL/GenBank/DDBJ databases">
        <authorList>
            <person name="Fleischmann R.D."/>
            <person name="Dodson R.J."/>
            <person name="Haft D.H."/>
            <person name="Merkel J.S."/>
            <person name="Nelson W.C."/>
            <person name="Fraser C.M."/>
        </authorList>
    </citation>
    <scope>NUCLEOTIDE SEQUENCE [LARGE SCALE GENOMIC DNA]</scope>
    <source>
        <strain>ATCC 700084 / mc(2)155</strain>
    </source>
</reference>
<reference key="2">
    <citation type="journal article" date="2007" name="Genome Biol.">
        <title>Interrupted coding sequences in Mycobacterium smegmatis: authentic mutations or sequencing errors?</title>
        <authorList>
            <person name="Deshayes C."/>
            <person name="Perrodou E."/>
            <person name="Gallien S."/>
            <person name="Euphrasie D."/>
            <person name="Schaeffer C."/>
            <person name="Van-Dorsselaer A."/>
            <person name="Poch O."/>
            <person name="Lecompte O."/>
            <person name="Reyrat J.-M."/>
        </authorList>
    </citation>
    <scope>NUCLEOTIDE SEQUENCE [LARGE SCALE GENOMIC DNA]</scope>
    <source>
        <strain>ATCC 700084 / mc(2)155</strain>
    </source>
</reference>
<reference key="3">
    <citation type="journal article" date="2009" name="Genome Res.">
        <title>Ortho-proteogenomics: multiple proteomes investigation through orthology and a new MS-based protocol.</title>
        <authorList>
            <person name="Gallien S."/>
            <person name="Perrodou E."/>
            <person name="Carapito C."/>
            <person name="Deshayes C."/>
            <person name="Reyrat J.-M."/>
            <person name="Van Dorsselaer A."/>
            <person name="Poch O."/>
            <person name="Schaeffer C."/>
            <person name="Lecompte O."/>
        </authorList>
    </citation>
    <scope>NUCLEOTIDE SEQUENCE [LARGE SCALE GENOMIC DNA]</scope>
    <source>
        <strain>ATCC 700084 / mc(2)155</strain>
    </source>
</reference>
<comment type="function">
    <text evidence="1">Catalyzes the reductive methylation of 2'-deoxyuridine-5'-monophosphate (dUMP) to 2'-deoxythymidine-5'-monophosphate (dTMP) while utilizing 5,10-methylenetetrahydrofolate (mTHF) as the methyl donor and reductant in the reaction, yielding dihydrofolate (DHF) as a by-product. This enzymatic reaction provides an intracellular de novo source of dTMP, an essential precursor for DNA biosynthesis.</text>
</comment>
<comment type="catalytic activity">
    <reaction evidence="1">
        <text>dUMP + (6R)-5,10-methylene-5,6,7,8-tetrahydrofolate = 7,8-dihydrofolate + dTMP</text>
        <dbReference type="Rhea" id="RHEA:12104"/>
        <dbReference type="ChEBI" id="CHEBI:15636"/>
        <dbReference type="ChEBI" id="CHEBI:57451"/>
        <dbReference type="ChEBI" id="CHEBI:63528"/>
        <dbReference type="ChEBI" id="CHEBI:246422"/>
        <dbReference type="EC" id="2.1.1.45"/>
    </reaction>
</comment>
<comment type="pathway">
    <text evidence="1">Pyrimidine metabolism; dTTP biosynthesis.</text>
</comment>
<comment type="subunit">
    <text evidence="1">Homodimer.</text>
</comment>
<comment type="subcellular location">
    <subcellularLocation>
        <location evidence="1">Cytoplasm</location>
    </subcellularLocation>
</comment>
<comment type="similarity">
    <text evidence="1">Belongs to the thymidylate synthase family. Bacterial-type ThyA subfamily.</text>
</comment>
<protein>
    <recommendedName>
        <fullName evidence="1">Thymidylate synthase</fullName>
        <shortName evidence="1">TS</shortName>
        <shortName evidence="1">TSase</shortName>
        <ecNumber evidence="1">2.1.1.45</ecNumber>
    </recommendedName>
</protein>
<dbReference type="EC" id="2.1.1.45" evidence="1"/>
<dbReference type="EMBL" id="CP000480">
    <property type="protein sequence ID" value="ABK70129.1"/>
    <property type="molecule type" value="Genomic_DNA"/>
</dbReference>
<dbReference type="EMBL" id="CP001663">
    <property type="protein sequence ID" value="AFP39074.1"/>
    <property type="molecule type" value="Genomic_DNA"/>
</dbReference>
<dbReference type="RefSeq" id="WP_011728518.1">
    <property type="nucleotide sequence ID" value="NZ_SIJM01000074.1"/>
</dbReference>
<dbReference type="RefSeq" id="YP_887007.1">
    <property type="nucleotide sequence ID" value="NC_008596.1"/>
</dbReference>
<dbReference type="SMR" id="A0QVR9"/>
<dbReference type="STRING" id="246196.MSMEG_2670"/>
<dbReference type="PaxDb" id="246196-MSMEI_2606"/>
<dbReference type="KEGG" id="msb:LJ00_13290"/>
<dbReference type="KEGG" id="msg:MSMEI_2606"/>
<dbReference type="KEGG" id="msm:MSMEG_2670"/>
<dbReference type="PATRIC" id="fig|246196.19.peg.2636"/>
<dbReference type="eggNOG" id="COG0207">
    <property type="taxonomic scope" value="Bacteria"/>
</dbReference>
<dbReference type="OrthoDB" id="9774633at2"/>
<dbReference type="UniPathway" id="UPA00575"/>
<dbReference type="Proteomes" id="UP000000757">
    <property type="component" value="Chromosome"/>
</dbReference>
<dbReference type="Proteomes" id="UP000006158">
    <property type="component" value="Chromosome"/>
</dbReference>
<dbReference type="GO" id="GO:0005829">
    <property type="term" value="C:cytosol"/>
    <property type="evidence" value="ECO:0007669"/>
    <property type="project" value="TreeGrafter"/>
</dbReference>
<dbReference type="GO" id="GO:0004799">
    <property type="term" value="F:thymidylate synthase activity"/>
    <property type="evidence" value="ECO:0007669"/>
    <property type="project" value="UniProtKB-UniRule"/>
</dbReference>
<dbReference type="GO" id="GO:0006231">
    <property type="term" value="P:dTMP biosynthetic process"/>
    <property type="evidence" value="ECO:0007669"/>
    <property type="project" value="UniProtKB-UniRule"/>
</dbReference>
<dbReference type="GO" id="GO:0006235">
    <property type="term" value="P:dTTP biosynthetic process"/>
    <property type="evidence" value="ECO:0007669"/>
    <property type="project" value="UniProtKB-UniRule"/>
</dbReference>
<dbReference type="GO" id="GO:0032259">
    <property type="term" value="P:methylation"/>
    <property type="evidence" value="ECO:0007669"/>
    <property type="project" value="UniProtKB-KW"/>
</dbReference>
<dbReference type="CDD" id="cd00351">
    <property type="entry name" value="TS_Pyrimidine_HMase"/>
    <property type="match status" value="1"/>
</dbReference>
<dbReference type="FunFam" id="3.30.572.10:FF:000001">
    <property type="entry name" value="Thymidylate synthase"/>
    <property type="match status" value="1"/>
</dbReference>
<dbReference type="Gene3D" id="3.30.572.10">
    <property type="entry name" value="Thymidylate synthase/dCMP hydroxymethylase domain"/>
    <property type="match status" value="1"/>
</dbReference>
<dbReference type="HAMAP" id="MF_00008">
    <property type="entry name" value="Thymidy_synth_bact"/>
    <property type="match status" value="1"/>
</dbReference>
<dbReference type="InterPro" id="IPR045097">
    <property type="entry name" value="Thymidate_synth/dCMP_Mease"/>
</dbReference>
<dbReference type="InterPro" id="IPR023451">
    <property type="entry name" value="Thymidate_synth/dCMP_Mease_dom"/>
</dbReference>
<dbReference type="InterPro" id="IPR036926">
    <property type="entry name" value="Thymidate_synth/dCMP_Mease_sf"/>
</dbReference>
<dbReference type="InterPro" id="IPR000398">
    <property type="entry name" value="Thymidylate_synthase"/>
</dbReference>
<dbReference type="InterPro" id="IPR020940">
    <property type="entry name" value="Thymidylate_synthase_AS"/>
</dbReference>
<dbReference type="NCBIfam" id="NF002497">
    <property type="entry name" value="PRK01827.1-3"/>
    <property type="match status" value="1"/>
</dbReference>
<dbReference type="NCBIfam" id="NF002499">
    <property type="entry name" value="PRK01827.1-5"/>
    <property type="match status" value="1"/>
</dbReference>
<dbReference type="NCBIfam" id="TIGR03284">
    <property type="entry name" value="thym_sym"/>
    <property type="match status" value="2"/>
</dbReference>
<dbReference type="PANTHER" id="PTHR11548:SF9">
    <property type="entry name" value="THYMIDYLATE SYNTHASE"/>
    <property type="match status" value="1"/>
</dbReference>
<dbReference type="PANTHER" id="PTHR11548">
    <property type="entry name" value="THYMIDYLATE SYNTHASE 1"/>
    <property type="match status" value="1"/>
</dbReference>
<dbReference type="Pfam" id="PF00303">
    <property type="entry name" value="Thymidylat_synt"/>
    <property type="match status" value="1"/>
</dbReference>
<dbReference type="PRINTS" id="PR00108">
    <property type="entry name" value="THYMDSNTHASE"/>
</dbReference>
<dbReference type="SUPFAM" id="SSF55831">
    <property type="entry name" value="Thymidylate synthase/dCMP hydroxymethylase"/>
    <property type="match status" value="1"/>
</dbReference>
<dbReference type="PROSITE" id="PS00091">
    <property type="entry name" value="THYMIDYLATE_SYNTHASE"/>
    <property type="match status" value="1"/>
</dbReference>
<sequence length="266" mass="30056">MPIDTPYEDLLRLVTERGTPKSDRTGTGTRSLFGHQMRYDLSAGFPLITTKKVHTKSVIYELLWFLRGDSNVRWLQEHGVTIWDEWASETGDLGPIYGVQWRSWPTPSGEHIDQISSALELLKSDPDSRRNIVSAWNVGEIPQMALPPCHAFFQFYVADGKLSCQLYQRSADLFLGVPFNIASYALLTHMMAAQAGLDVGEFIWTGGDCHIYDNHTEQVALQLSREPRPYPELVLAPRDSIFDYTYEDIAIVNYDPHPAIKAPVAV</sequence>
<name>TYSY_MYCS2</name>